<gene>
    <name type="primary">nadC</name>
    <name type="synonym">yrxB</name>
    <name type="ordered locus">BSU27860</name>
</gene>
<feature type="chain" id="PRO_0000155941" description="Probable nicotinate-nucleotide pyrophosphorylase [carboxylating]">
    <location>
        <begin position="1"/>
        <end position="289"/>
    </location>
</feature>
<feature type="binding site" evidence="1">
    <location>
        <position position="96"/>
    </location>
    <ligand>
        <name>substrate</name>
    </ligand>
</feature>
<feature type="binding site" evidence="1">
    <location>
        <begin position="129"/>
        <end position="131"/>
    </location>
    <ligand>
        <name>substrate</name>
    </ligand>
</feature>
<feature type="binding site" evidence="1">
    <location>
        <position position="153"/>
    </location>
    <ligand>
        <name>substrate</name>
    </ligand>
</feature>
<feature type="binding site" evidence="1">
    <location>
        <position position="163"/>
    </location>
    <ligand>
        <name>substrate</name>
    </ligand>
</feature>
<feature type="binding site" evidence="1">
    <location>
        <position position="193"/>
    </location>
    <ligand>
        <name>substrate</name>
    </ligand>
</feature>
<feature type="binding site" evidence="1">
    <location>
        <position position="214"/>
    </location>
    <ligand>
        <name>substrate</name>
    </ligand>
</feature>
<feature type="binding site" evidence="1">
    <location>
        <begin position="237"/>
        <end position="239"/>
    </location>
    <ligand>
        <name>substrate</name>
    </ligand>
</feature>
<feature type="binding site" evidence="1">
    <location>
        <begin position="258"/>
        <end position="260"/>
    </location>
    <ligand>
        <name>substrate</name>
    </ligand>
</feature>
<reference key="1">
    <citation type="journal article" date="1997" name="Nature">
        <title>The complete genome sequence of the Gram-positive bacterium Bacillus subtilis.</title>
        <authorList>
            <person name="Kunst F."/>
            <person name="Ogasawara N."/>
            <person name="Moszer I."/>
            <person name="Albertini A.M."/>
            <person name="Alloni G."/>
            <person name="Azevedo V."/>
            <person name="Bertero M.G."/>
            <person name="Bessieres P."/>
            <person name="Bolotin A."/>
            <person name="Borchert S."/>
            <person name="Borriss R."/>
            <person name="Boursier L."/>
            <person name="Brans A."/>
            <person name="Braun M."/>
            <person name="Brignell S.C."/>
            <person name="Bron S."/>
            <person name="Brouillet S."/>
            <person name="Bruschi C.V."/>
            <person name="Caldwell B."/>
            <person name="Capuano V."/>
            <person name="Carter N.M."/>
            <person name="Choi S.-K."/>
            <person name="Codani J.-J."/>
            <person name="Connerton I.F."/>
            <person name="Cummings N.J."/>
            <person name="Daniel R.A."/>
            <person name="Denizot F."/>
            <person name="Devine K.M."/>
            <person name="Duesterhoeft A."/>
            <person name="Ehrlich S.D."/>
            <person name="Emmerson P.T."/>
            <person name="Entian K.-D."/>
            <person name="Errington J."/>
            <person name="Fabret C."/>
            <person name="Ferrari E."/>
            <person name="Foulger D."/>
            <person name="Fritz C."/>
            <person name="Fujita M."/>
            <person name="Fujita Y."/>
            <person name="Fuma S."/>
            <person name="Galizzi A."/>
            <person name="Galleron N."/>
            <person name="Ghim S.-Y."/>
            <person name="Glaser P."/>
            <person name="Goffeau A."/>
            <person name="Golightly E.J."/>
            <person name="Grandi G."/>
            <person name="Guiseppi G."/>
            <person name="Guy B.J."/>
            <person name="Haga K."/>
            <person name="Haiech J."/>
            <person name="Harwood C.R."/>
            <person name="Henaut A."/>
            <person name="Hilbert H."/>
            <person name="Holsappel S."/>
            <person name="Hosono S."/>
            <person name="Hullo M.-F."/>
            <person name="Itaya M."/>
            <person name="Jones L.-M."/>
            <person name="Joris B."/>
            <person name="Karamata D."/>
            <person name="Kasahara Y."/>
            <person name="Klaerr-Blanchard M."/>
            <person name="Klein C."/>
            <person name="Kobayashi Y."/>
            <person name="Koetter P."/>
            <person name="Koningstein G."/>
            <person name="Krogh S."/>
            <person name="Kumano M."/>
            <person name="Kurita K."/>
            <person name="Lapidus A."/>
            <person name="Lardinois S."/>
            <person name="Lauber J."/>
            <person name="Lazarevic V."/>
            <person name="Lee S.-M."/>
            <person name="Levine A."/>
            <person name="Liu H."/>
            <person name="Masuda S."/>
            <person name="Mauel C."/>
            <person name="Medigue C."/>
            <person name="Medina N."/>
            <person name="Mellado R.P."/>
            <person name="Mizuno M."/>
            <person name="Moestl D."/>
            <person name="Nakai S."/>
            <person name="Noback M."/>
            <person name="Noone D."/>
            <person name="O'Reilly M."/>
            <person name="Ogawa K."/>
            <person name="Ogiwara A."/>
            <person name="Oudega B."/>
            <person name="Park S.-H."/>
            <person name="Parro V."/>
            <person name="Pohl T.M."/>
            <person name="Portetelle D."/>
            <person name="Porwollik S."/>
            <person name="Prescott A.M."/>
            <person name="Presecan E."/>
            <person name="Pujic P."/>
            <person name="Purnelle B."/>
            <person name="Rapoport G."/>
            <person name="Rey M."/>
            <person name="Reynolds S."/>
            <person name="Rieger M."/>
            <person name="Rivolta C."/>
            <person name="Rocha E."/>
            <person name="Roche B."/>
            <person name="Rose M."/>
            <person name="Sadaie Y."/>
            <person name="Sato T."/>
            <person name="Scanlan E."/>
            <person name="Schleich S."/>
            <person name="Schroeter R."/>
            <person name="Scoffone F."/>
            <person name="Sekiguchi J."/>
            <person name="Sekowska A."/>
            <person name="Seror S.J."/>
            <person name="Serror P."/>
            <person name="Shin B.-S."/>
            <person name="Soldo B."/>
            <person name="Sorokin A."/>
            <person name="Tacconi E."/>
            <person name="Takagi T."/>
            <person name="Takahashi H."/>
            <person name="Takemaru K."/>
            <person name="Takeuchi M."/>
            <person name="Tamakoshi A."/>
            <person name="Tanaka T."/>
            <person name="Terpstra P."/>
            <person name="Tognoni A."/>
            <person name="Tosato V."/>
            <person name="Uchiyama S."/>
            <person name="Vandenbol M."/>
            <person name="Vannier F."/>
            <person name="Vassarotti A."/>
            <person name="Viari A."/>
            <person name="Wambutt R."/>
            <person name="Wedler E."/>
            <person name="Wedler H."/>
            <person name="Weitzenegger T."/>
            <person name="Winters P."/>
            <person name="Wipat A."/>
            <person name="Yamamoto H."/>
            <person name="Yamane K."/>
            <person name="Yasumoto K."/>
            <person name="Yata K."/>
            <person name="Yoshida K."/>
            <person name="Yoshikawa H.-F."/>
            <person name="Zumstein E."/>
            <person name="Yoshikawa H."/>
            <person name="Danchin A."/>
        </authorList>
    </citation>
    <scope>NUCLEOTIDE SEQUENCE [LARGE SCALE GENOMIC DNA]</scope>
    <source>
        <strain>168</strain>
    </source>
</reference>
<reference key="2">
    <citation type="journal article" date="1993" name="J. Bacteriol.">
        <title>Cloning, nucleotide sequence, and regulation of the Bacillus subtilis nadB gene and a nifS-like gene, both of which are essential for NAD biosynthesis.</title>
        <authorList>
            <person name="Sun D."/>
            <person name="Setlow P.L."/>
        </authorList>
    </citation>
    <scope>NUCLEOTIDE SEQUENCE [GENOMIC DNA] OF 1-270</scope>
    <source>
        <strain>168</strain>
    </source>
</reference>
<reference key="3">
    <citation type="journal article" date="1997" name="Electrophoresis">
        <title>First steps from a two-dimensional protein index towards a response-regulation map for Bacillus subtilis.</title>
        <authorList>
            <person name="Antelmann H."/>
            <person name="Bernhardt J."/>
            <person name="Schmid R."/>
            <person name="Mach H."/>
            <person name="Voelker U."/>
            <person name="Hecker M."/>
        </authorList>
    </citation>
    <scope>PROTEIN SEQUENCE OF 1-22</scope>
    <source>
        <strain>168 / IS58</strain>
    </source>
</reference>
<comment type="function">
    <text evidence="1">Involved in the catabolism of quinolinic acid (QA).</text>
</comment>
<comment type="catalytic activity">
    <reaction>
        <text>nicotinate beta-D-ribonucleotide + CO2 + diphosphate = quinolinate + 5-phospho-alpha-D-ribose 1-diphosphate + 2 H(+)</text>
        <dbReference type="Rhea" id="RHEA:12733"/>
        <dbReference type="ChEBI" id="CHEBI:15378"/>
        <dbReference type="ChEBI" id="CHEBI:16526"/>
        <dbReference type="ChEBI" id="CHEBI:29959"/>
        <dbReference type="ChEBI" id="CHEBI:33019"/>
        <dbReference type="ChEBI" id="CHEBI:57502"/>
        <dbReference type="ChEBI" id="CHEBI:58017"/>
        <dbReference type="EC" id="2.4.2.19"/>
    </reaction>
</comment>
<comment type="pathway">
    <text>Cofactor biosynthesis; NAD(+) biosynthesis; nicotinate D-ribonucleotide from quinolinate: step 1/1.</text>
</comment>
<comment type="subunit">
    <text evidence="1">Hexamer formed by 3 homodimers.</text>
</comment>
<comment type="induction">
    <text>By heat shock, salt stress, oxidative stress, glucose limitation and oxygen limitation.</text>
</comment>
<comment type="similarity">
    <text evidence="2">Belongs to the NadC/ModD family.</text>
</comment>
<comment type="caution">
    <text evidence="2">It is uncertain whether Met-1, Leu-59 or Met-74 is the initiator.</text>
</comment>
<sequence>MNHLQLKKLLNHFFLEDIGTGDLTSQSIFGEQSCEAEIVAKSEGIFAGAAIIKEGFSLLDENVQSILHKKDGDMLHKGEVIAELHGPAAALLSGERVVLNLIQRLSGIATMTREAVRCLDDEQIKICDTRKTTPGLRMLEKYAVRAGGGYNHRFGLYDGIMIKDNHIAACGSILEACKKARQAAGHMVNIEVEIETEEQLREAIAAGADVIMFDNCPPDTVRHFAKLTPANIKTEASGGITLESLPAFKGTGVNYISLGFLTHSVKSLDISMDVTLSNESVEECCYVNS</sequence>
<accession>P39666</accession>
<name>NADC_BACSU</name>
<protein>
    <recommendedName>
        <fullName>Probable nicotinate-nucleotide pyrophosphorylase [carboxylating]</fullName>
        <ecNumber>2.4.2.19</ecNumber>
    </recommendedName>
    <alternativeName>
        <fullName>General stress protein 70</fullName>
        <shortName>GSP70</shortName>
    </alternativeName>
    <alternativeName>
        <fullName>Quinolinate phosphoribosyltransferase [decarboxylating]</fullName>
        <shortName>QAPRTase</shortName>
    </alternativeName>
</protein>
<evidence type="ECO:0000250" key="1"/>
<evidence type="ECO:0000305" key="2"/>
<organism>
    <name type="scientific">Bacillus subtilis (strain 168)</name>
    <dbReference type="NCBI Taxonomy" id="224308"/>
    <lineage>
        <taxon>Bacteria</taxon>
        <taxon>Bacillati</taxon>
        <taxon>Bacillota</taxon>
        <taxon>Bacilli</taxon>
        <taxon>Bacillales</taxon>
        <taxon>Bacillaceae</taxon>
        <taxon>Bacillus</taxon>
    </lineage>
</organism>
<keyword id="KW-0903">Direct protein sequencing</keyword>
<keyword id="KW-0328">Glycosyltransferase</keyword>
<keyword id="KW-0662">Pyridine nucleotide biosynthesis</keyword>
<keyword id="KW-1185">Reference proteome</keyword>
<keyword id="KW-0346">Stress response</keyword>
<keyword id="KW-0808">Transferase</keyword>
<dbReference type="EC" id="2.4.2.19"/>
<dbReference type="EMBL" id="AL009126">
    <property type="protein sequence ID" value="CAB14746.1"/>
    <property type="molecule type" value="Genomic_DNA"/>
</dbReference>
<dbReference type="EMBL" id="M98822">
    <property type="status" value="NOT_ANNOTATED_CDS"/>
    <property type="molecule type" value="Genomic_DNA"/>
</dbReference>
<dbReference type="PIR" id="G69663">
    <property type="entry name" value="G69663"/>
</dbReference>
<dbReference type="RefSeq" id="NP_390664.1">
    <property type="nucleotide sequence ID" value="NC_000964.3"/>
</dbReference>
<dbReference type="RefSeq" id="WP_003229689.1">
    <property type="nucleotide sequence ID" value="NZ_OZ025638.1"/>
</dbReference>
<dbReference type="SMR" id="P39666"/>
<dbReference type="FunCoup" id="P39666">
    <property type="interactions" value="538"/>
</dbReference>
<dbReference type="STRING" id="224308.BSU27860"/>
<dbReference type="PaxDb" id="224308-BSU27860"/>
<dbReference type="EnsemblBacteria" id="CAB14746">
    <property type="protein sequence ID" value="CAB14746"/>
    <property type="gene ID" value="BSU_27860"/>
</dbReference>
<dbReference type="GeneID" id="936245"/>
<dbReference type="KEGG" id="bsu:BSU27860"/>
<dbReference type="PATRIC" id="fig|224308.179.peg.3027"/>
<dbReference type="eggNOG" id="COG0157">
    <property type="taxonomic scope" value="Bacteria"/>
</dbReference>
<dbReference type="InParanoid" id="P39666"/>
<dbReference type="OrthoDB" id="9782546at2"/>
<dbReference type="PhylomeDB" id="P39666"/>
<dbReference type="BioCyc" id="BSUB:BSU27860-MONOMER"/>
<dbReference type="UniPathway" id="UPA00253">
    <property type="reaction ID" value="UER00331"/>
</dbReference>
<dbReference type="Proteomes" id="UP000001570">
    <property type="component" value="Chromosome"/>
</dbReference>
<dbReference type="GO" id="GO:0005737">
    <property type="term" value="C:cytoplasm"/>
    <property type="evidence" value="ECO:0000318"/>
    <property type="project" value="GO_Central"/>
</dbReference>
<dbReference type="GO" id="GO:0004514">
    <property type="term" value="F:nicotinate-nucleotide diphosphorylase (carboxylating) activity"/>
    <property type="evidence" value="ECO:0000318"/>
    <property type="project" value="GO_Central"/>
</dbReference>
<dbReference type="GO" id="GO:0009435">
    <property type="term" value="P:NAD biosynthetic process"/>
    <property type="evidence" value="ECO:0000318"/>
    <property type="project" value="GO_Central"/>
</dbReference>
<dbReference type="GO" id="GO:0034213">
    <property type="term" value="P:quinolinate catabolic process"/>
    <property type="evidence" value="ECO:0000318"/>
    <property type="project" value="GO_Central"/>
</dbReference>
<dbReference type="CDD" id="cd01572">
    <property type="entry name" value="QPRTase"/>
    <property type="match status" value="1"/>
</dbReference>
<dbReference type="FunFam" id="3.90.1170.20:FF:000001">
    <property type="entry name" value="Nicotinate-nucleotide diphosphorylase (Carboxylating)"/>
    <property type="match status" value="1"/>
</dbReference>
<dbReference type="FunFam" id="3.20.20.70:FF:000030">
    <property type="entry name" value="Nicotinate-nucleotide pyrophosphorylase, carboxylating"/>
    <property type="match status" value="1"/>
</dbReference>
<dbReference type="Gene3D" id="3.20.20.70">
    <property type="entry name" value="Aldolase class I"/>
    <property type="match status" value="1"/>
</dbReference>
<dbReference type="Gene3D" id="3.90.1170.20">
    <property type="entry name" value="Quinolinate phosphoribosyl transferase, N-terminal domain"/>
    <property type="match status" value="1"/>
</dbReference>
<dbReference type="InterPro" id="IPR013785">
    <property type="entry name" value="Aldolase_TIM"/>
</dbReference>
<dbReference type="InterPro" id="IPR004393">
    <property type="entry name" value="NadC"/>
</dbReference>
<dbReference type="InterPro" id="IPR027277">
    <property type="entry name" value="NadC/ModD"/>
</dbReference>
<dbReference type="InterPro" id="IPR036068">
    <property type="entry name" value="Nicotinate_pribotase-like_C"/>
</dbReference>
<dbReference type="InterPro" id="IPR037128">
    <property type="entry name" value="Quinolinate_PRibosylTase_N_sf"/>
</dbReference>
<dbReference type="InterPro" id="IPR002638">
    <property type="entry name" value="Quinolinate_PRibosylTrfase_C"/>
</dbReference>
<dbReference type="InterPro" id="IPR022412">
    <property type="entry name" value="Quinolinate_PRibosylTrfase_N"/>
</dbReference>
<dbReference type="NCBIfam" id="TIGR00078">
    <property type="entry name" value="nadC"/>
    <property type="match status" value="1"/>
</dbReference>
<dbReference type="PANTHER" id="PTHR32179">
    <property type="entry name" value="NICOTINATE-NUCLEOTIDE PYROPHOSPHORYLASE [CARBOXYLATING]"/>
    <property type="match status" value="1"/>
</dbReference>
<dbReference type="PANTHER" id="PTHR32179:SF3">
    <property type="entry name" value="NICOTINATE-NUCLEOTIDE PYROPHOSPHORYLASE [CARBOXYLATING]"/>
    <property type="match status" value="1"/>
</dbReference>
<dbReference type="Pfam" id="PF01729">
    <property type="entry name" value="QRPTase_C"/>
    <property type="match status" value="1"/>
</dbReference>
<dbReference type="Pfam" id="PF02749">
    <property type="entry name" value="QRPTase_N"/>
    <property type="match status" value="1"/>
</dbReference>
<dbReference type="PIRSF" id="PIRSF006250">
    <property type="entry name" value="NadC_ModD"/>
    <property type="match status" value="1"/>
</dbReference>
<dbReference type="SUPFAM" id="SSF51690">
    <property type="entry name" value="Nicotinate/Quinolinate PRTase C-terminal domain-like"/>
    <property type="match status" value="1"/>
</dbReference>
<dbReference type="SUPFAM" id="SSF54675">
    <property type="entry name" value="Nicotinate/Quinolinate PRTase N-terminal domain-like"/>
    <property type="match status" value="1"/>
</dbReference>
<proteinExistence type="evidence at protein level"/>